<keyword id="KW-0030">Aminoacyl-tRNA synthetase</keyword>
<keyword id="KW-0067">ATP-binding</keyword>
<keyword id="KW-0963">Cytoplasm</keyword>
<keyword id="KW-0436">Ligase</keyword>
<keyword id="KW-0460">Magnesium</keyword>
<keyword id="KW-0479">Metal-binding</keyword>
<keyword id="KW-0547">Nucleotide-binding</keyword>
<keyword id="KW-0648">Protein biosynthesis</keyword>
<keyword id="KW-1185">Reference proteome</keyword>
<protein>
    <recommendedName>
        <fullName evidence="1">Lysine--tRNA ligase</fullName>
        <ecNumber evidence="1">6.1.1.6</ecNumber>
    </recommendedName>
    <alternativeName>
        <fullName evidence="1">Lysyl-tRNA synthetase</fullName>
        <shortName evidence="1">LysRS</shortName>
    </alternativeName>
</protein>
<feature type="chain" id="PRO_0000152630" description="Lysine--tRNA ligase">
    <location>
        <begin position="1"/>
        <end position="498"/>
    </location>
</feature>
<feature type="binding site" evidence="1">
    <location>
        <position position="411"/>
    </location>
    <ligand>
        <name>Mg(2+)</name>
        <dbReference type="ChEBI" id="CHEBI:18420"/>
        <label>1</label>
    </ligand>
</feature>
<feature type="binding site" evidence="1">
    <location>
        <position position="418"/>
    </location>
    <ligand>
        <name>Mg(2+)</name>
        <dbReference type="ChEBI" id="CHEBI:18420"/>
        <label>1</label>
    </ligand>
</feature>
<feature type="binding site" evidence="1">
    <location>
        <position position="418"/>
    </location>
    <ligand>
        <name>Mg(2+)</name>
        <dbReference type="ChEBI" id="CHEBI:18420"/>
        <label>2</label>
    </ligand>
</feature>
<sequence length="498" mass="57034">MAEEQQAHLEDLNDQMLVRREKMEALREEGIDPFGKRFDRTHNSAELHEQYDNHTKEELSEMNTEVSVAGRMMTKRGKGKAGFAHLQDREGQIQIYVRKDQVGDEAYELFKHADLGDFFGVTGQVMKTNTGEVTVKAQTITLLTKALRPLPDKYHGLTNVEQRYRQRYLDLISNKESFDRFMKRSQIISEIRRYLDGNGYVEVETPVLHNEAGGAAARPFITHHNALDMDLYLRIALELHLKRLIVGGMEKVYEIGRVFRNEGIDTTHNPEFTMLEAYTAYTDYQDVMDLTEGIIRNAAEKVLGTTDITYDGQAVDLGSPFKRLHMVDAVKEQTGVDFWQEMTIEEARALAKEHNVEITDAMTVGHIINEFFETFVEDTLQQPTFIYGHPVAVSPLAKKNPEDGRFTDRFELFIIGKEFANAFTELNDPIDQRERFEEQEKEREQGNDEAHGVDEDFIEALEYGLPPTGGLGIGIDRLVMLLTDAQSIRDVLLFPTMR</sequence>
<evidence type="ECO:0000255" key="1">
    <source>
        <dbReference type="HAMAP-Rule" id="MF_00252"/>
    </source>
</evidence>
<accession>Q839A8</accession>
<comment type="catalytic activity">
    <reaction evidence="1">
        <text>tRNA(Lys) + L-lysine + ATP = L-lysyl-tRNA(Lys) + AMP + diphosphate</text>
        <dbReference type="Rhea" id="RHEA:20792"/>
        <dbReference type="Rhea" id="RHEA-COMP:9696"/>
        <dbReference type="Rhea" id="RHEA-COMP:9697"/>
        <dbReference type="ChEBI" id="CHEBI:30616"/>
        <dbReference type="ChEBI" id="CHEBI:32551"/>
        <dbReference type="ChEBI" id="CHEBI:33019"/>
        <dbReference type="ChEBI" id="CHEBI:78442"/>
        <dbReference type="ChEBI" id="CHEBI:78529"/>
        <dbReference type="ChEBI" id="CHEBI:456215"/>
        <dbReference type="EC" id="6.1.1.6"/>
    </reaction>
</comment>
<comment type="cofactor">
    <cofactor evidence="1">
        <name>Mg(2+)</name>
        <dbReference type="ChEBI" id="CHEBI:18420"/>
    </cofactor>
    <text evidence="1">Binds 3 Mg(2+) ions per subunit.</text>
</comment>
<comment type="subunit">
    <text evidence="1">Homodimer.</text>
</comment>
<comment type="subcellular location">
    <subcellularLocation>
        <location evidence="1">Cytoplasm</location>
    </subcellularLocation>
</comment>
<comment type="similarity">
    <text evidence="1">Belongs to the class-II aminoacyl-tRNA synthetase family.</text>
</comment>
<gene>
    <name evidence="1" type="primary">lysS</name>
    <name type="ordered locus">EF_0268</name>
</gene>
<name>SYK_ENTFA</name>
<proteinExistence type="inferred from homology"/>
<dbReference type="EC" id="6.1.1.6" evidence="1"/>
<dbReference type="EMBL" id="AE016830">
    <property type="protein sequence ID" value="AAO80133.1"/>
    <property type="molecule type" value="Genomic_DNA"/>
</dbReference>
<dbReference type="RefSeq" id="NP_814062.1">
    <property type="nucleotide sequence ID" value="NC_004668.1"/>
</dbReference>
<dbReference type="RefSeq" id="WP_002359372.1">
    <property type="nucleotide sequence ID" value="NZ_KE136524.1"/>
</dbReference>
<dbReference type="SMR" id="Q839A8"/>
<dbReference type="STRING" id="226185.EF_0268"/>
<dbReference type="EnsemblBacteria" id="AAO80133">
    <property type="protein sequence ID" value="AAO80133"/>
    <property type="gene ID" value="EF_0268"/>
</dbReference>
<dbReference type="KEGG" id="efa:EF0268"/>
<dbReference type="PATRIC" id="fig|226185.45.peg.1"/>
<dbReference type="eggNOG" id="COG1190">
    <property type="taxonomic scope" value="Bacteria"/>
</dbReference>
<dbReference type="HOGENOM" id="CLU_008255_6_0_9"/>
<dbReference type="Proteomes" id="UP000001415">
    <property type="component" value="Chromosome"/>
</dbReference>
<dbReference type="GO" id="GO:0005829">
    <property type="term" value="C:cytosol"/>
    <property type="evidence" value="ECO:0007669"/>
    <property type="project" value="TreeGrafter"/>
</dbReference>
<dbReference type="GO" id="GO:0005524">
    <property type="term" value="F:ATP binding"/>
    <property type="evidence" value="ECO:0007669"/>
    <property type="project" value="UniProtKB-UniRule"/>
</dbReference>
<dbReference type="GO" id="GO:0140096">
    <property type="term" value="F:catalytic activity, acting on a protein"/>
    <property type="evidence" value="ECO:0007669"/>
    <property type="project" value="UniProtKB-ARBA"/>
</dbReference>
<dbReference type="GO" id="GO:0004824">
    <property type="term" value="F:lysine-tRNA ligase activity"/>
    <property type="evidence" value="ECO:0007669"/>
    <property type="project" value="UniProtKB-UniRule"/>
</dbReference>
<dbReference type="GO" id="GO:0000287">
    <property type="term" value="F:magnesium ion binding"/>
    <property type="evidence" value="ECO:0007669"/>
    <property type="project" value="UniProtKB-UniRule"/>
</dbReference>
<dbReference type="GO" id="GO:0016740">
    <property type="term" value="F:transferase activity"/>
    <property type="evidence" value="ECO:0007669"/>
    <property type="project" value="UniProtKB-ARBA"/>
</dbReference>
<dbReference type="GO" id="GO:0000049">
    <property type="term" value="F:tRNA binding"/>
    <property type="evidence" value="ECO:0007669"/>
    <property type="project" value="TreeGrafter"/>
</dbReference>
<dbReference type="GO" id="GO:0006430">
    <property type="term" value="P:lysyl-tRNA aminoacylation"/>
    <property type="evidence" value="ECO:0007669"/>
    <property type="project" value="UniProtKB-UniRule"/>
</dbReference>
<dbReference type="CDD" id="cd00775">
    <property type="entry name" value="LysRS_core"/>
    <property type="match status" value="1"/>
</dbReference>
<dbReference type="CDD" id="cd04322">
    <property type="entry name" value="LysRS_N"/>
    <property type="match status" value="1"/>
</dbReference>
<dbReference type="FunFam" id="2.40.50.140:FF:000024">
    <property type="entry name" value="Lysine--tRNA ligase"/>
    <property type="match status" value="1"/>
</dbReference>
<dbReference type="FunFam" id="3.30.930.10:FF:000001">
    <property type="entry name" value="Lysine--tRNA ligase"/>
    <property type="match status" value="1"/>
</dbReference>
<dbReference type="Gene3D" id="3.30.930.10">
    <property type="entry name" value="Bira Bifunctional Protein, Domain 2"/>
    <property type="match status" value="1"/>
</dbReference>
<dbReference type="Gene3D" id="2.40.50.140">
    <property type="entry name" value="Nucleic acid-binding proteins"/>
    <property type="match status" value="1"/>
</dbReference>
<dbReference type="HAMAP" id="MF_00252">
    <property type="entry name" value="Lys_tRNA_synth_class2"/>
    <property type="match status" value="1"/>
</dbReference>
<dbReference type="InterPro" id="IPR004364">
    <property type="entry name" value="Aa-tRNA-synt_II"/>
</dbReference>
<dbReference type="InterPro" id="IPR006195">
    <property type="entry name" value="aa-tRNA-synth_II"/>
</dbReference>
<dbReference type="InterPro" id="IPR045864">
    <property type="entry name" value="aa-tRNA-synth_II/BPL/LPL"/>
</dbReference>
<dbReference type="InterPro" id="IPR002313">
    <property type="entry name" value="Lys-tRNA-ligase_II"/>
</dbReference>
<dbReference type="InterPro" id="IPR034762">
    <property type="entry name" value="Lys-tRNA-ligase_II_bac/euk"/>
</dbReference>
<dbReference type="InterPro" id="IPR044136">
    <property type="entry name" value="Lys-tRNA-ligase_II_N"/>
</dbReference>
<dbReference type="InterPro" id="IPR018149">
    <property type="entry name" value="Lys-tRNA-synth_II_C"/>
</dbReference>
<dbReference type="InterPro" id="IPR012340">
    <property type="entry name" value="NA-bd_OB-fold"/>
</dbReference>
<dbReference type="InterPro" id="IPR004365">
    <property type="entry name" value="NA-bd_OB_tRNA"/>
</dbReference>
<dbReference type="NCBIfam" id="TIGR00499">
    <property type="entry name" value="lysS_bact"/>
    <property type="match status" value="1"/>
</dbReference>
<dbReference type="NCBIfam" id="NF001756">
    <property type="entry name" value="PRK00484.1"/>
    <property type="match status" value="1"/>
</dbReference>
<dbReference type="PANTHER" id="PTHR42918:SF15">
    <property type="entry name" value="LYSINE--TRNA LIGASE, CHLOROPLASTIC_MITOCHONDRIAL"/>
    <property type="match status" value="1"/>
</dbReference>
<dbReference type="PANTHER" id="PTHR42918">
    <property type="entry name" value="LYSYL-TRNA SYNTHETASE"/>
    <property type="match status" value="1"/>
</dbReference>
<dbReference type="Pfam" id="PF00152">
    <property type="entry name" value="tRNA-synt_2"/>
    <property type="match status" value="1"/>
</dbReference>
<dbReference type="Pfam" id="PF01336">
    <property type="entry name" value="tRNA_anti-codon"/>
    <property type="match status" value="1"/>
</dbReference>
<dbReference type="PIRSF" id="PIRSF039101">
    <property type="entry name" value="LysRS2"/>
    <property type="match status" value="1"/>
</dbReference>
<dbReference type="PRINTS" id="PR00982">
    <property type="entry name" value="TRNASYNTHLYS"/>
</dbReference>
<dbReference type="SUPFAM" id="SSF55681">
    <property type="entry name" value="Class II aaRS and biotin synthetases"/>
    <property type="match status" value="1"/>
</dbReference>
<dbReference type="SUPFAM" id="SSF50249">
    <property type="entry name" value="Nucleic acid-binding proteins"/>
    <property type="match status" value="1"/>
</dbReference>
<dbReference type="PROSITE" id="PS50862">
    <property type="entry name" value="AA_TRNA_LIGASE_II"/>
    <property type="match status" value="1"/>
</dbReference>
<organism>
    <name type="scientific">Enterococcus faecalis (strain ATCC 700802 / V583)</name>
    <dbReference type="NCBI Taxonomy" id="226185"/>
    <lineage>
        <taxon>Bacteria</taxon>
        <taxon>Bacillati</taxon>
        <taxon>Bacillota</taxon>
        <taxon>Bacilli</taxon>
        <taxon>Lactobacillales</taxon>
        <taxon>Enterococcaceae</taxon>
        <taxon>Enterococcus</taxon>
    </lineage>
</organism>
<reference key="1">
    <citation type="journal article" date="2003" name="Science">
        <title>Role of mobile DNA in the evolution of vancomycin-resistant Enterococcus faecalis.</title>
        <authorList>
            <person name="Paulsen I.T."/>
            <person name="Banerjei L."/>
            <person name="Myers G.S.A."/>
            <person name="Nelson K.E."/>
            <person name="Seshadri R."/>
            <person name="Read T.D."/>
            <person name="Fouts D.E."/>
            <person name="Eisen J.A."/>
            <person name="Gill S.R."/>
            <person name="Heidelberg J.F."/>
            <person name="Tettelin H."/>
            <person name="Dodson R.J."/>
            <person name="Umayam L.A."/>
            <person name="Brinkac L.M."/>
            <person name="Beanan M.J."/>
            <person name="Daugherty S.C."/>
            <person name="DeBoy R.T."/>
            <person name="Durkin S.A."/>
            <person name="Kolonay J.F."/>
            <person name="Madupu R."/>
            <person name="Nelson W.C."/>
            <person name="Vamathevan J.J."/>
            <person name="Tran B."/>
            <person name="Upton J."/>
            <person name="Hansen T."/>
            <person name="Shetty J."/>
            <person name="Khouri H.M."/>
            <person name="Utterback T.R."/>
            <person name="Radune D."/>
            <person name="Ketchum K.A."/>
            <person name="Dougherty B.A."/>
            <person name="Fraser C.M."/>
        </authorList>
    </citation>
    <scope>NUCLEOTIDE SEQUENCE [LARGE SCALE GENOMIC DNA]</scope>
    <source>
        <strain>ATCC 700802 / V583</strain>
    </source>
</reference>